<proteinExistence type="evidence at protein level"/>
<keyword id="KW-0002">3D-structure</keyword>
<keyword id="KW-0025">Alternative splicing</keyword>
<keyword id="KW-0963">Cytoplasm</keyword>
<keyword id="KW-0378">Hydrolase</keyword>
<keyword id="KW-0539">Nucleus</keyword>
<keyword id="KW-0645">Protease</keyword>
<keyword id="KW-1267">Proteomics identification</keyword>
<keyword id="KW-1185">Reference proteome</keyword>
<keyword id="KW-0788">Thiol protease</keyword>
<keyword id="KW-0833">Ubl conjugation pathway</keyword>
<sequence>MDKILEGLVSSSHPLPLKRVIVRKVVESAEHWLDEAQCEAMFDLTTRLILEGQDPFQRQVGHQVLEAYARYHRPEFESFFNKTFVLGLLHQGYHSLDRKDVAILDYIHNGLKLIMSCPSVLDLFSLLQVEVLRMVCERPEPQLCARLSDLLTDFVQCIPKGKLSITFCQQLVRTIGHFQCVSTQERELREYVSQVTKVSNLLQNIWKAEPATLLPSLQEVFASISSTDASFEPSVALASLVQHIPLQMITVLIRSLTTDPNVKDASMTQALCRMIDWLSWPLAQHVDTWVIALLKGLAAVQKFTILIDVTLLKIELVFNRLWFPLVRPGALAVLSHMLLSFQHSPEAFHLIVPHVVNLVHSFKNDGLPSSTAFLVQLTELIHCMMYHYSGFPDLYEPILEAIKDFPKPSEEKIKLILNQSAWTSQSNSLASCLSRLSGKSETGKTGLINLGNTCYMNSVIQALFMATDFRRQVLSLNLNGCNSLMKKLQHLFAFLAHTQREAYAPRIFFEASRPPWFTPRSQQDCSEYLRFLLDRLHEEEKILKVQASHKPSEILECSETSLQEVASKAAVLTETPRTSDGEKTLIEKMFGGKLRTHIRCLNCRSTSQKVEAFTDLSLAFCPSSSLENMSVQDPASSPSIQDGGLMQASVPGPSEEPVVYNPTTAAFICDSLVNEKTIGSPPNEFYCSENTSVPNESNKILVNKDVPQKPGGETTPSVTDLLNYFLAPEILTGDNQYYCENCASLQNAEKTMQITEEPEYLILTLLRFSYDQKYHVRRKILDNVSLPLVLELPVKRITSFSSLSESWSVDVDFTDLSENLAKKLKPSGTDEASCTKLVPYLLSSVVVHSGISSESGHYYSYARNITSTDSSYQMYHQSEALALASSQSHLLGRDSPSAVFEQDLENKEMSKEWFLFNDSRVTFTSFQSVQKITSRFPKDTAYVLLYKKQHSTNGLSGNNPTSGLWINGDPPLQKELMDAITKDNKLYLQEQELNARARALQAASASCSFRPNGFDDNDPPGSCGPTGGGGGGGFNTVGRLVF</sequence>
<comment type="function">
    <text evidence="5 6 7 8 9 10 11 12">Deubiquitinating enzyme that plays a role in various cellular processes, including DNA repair, cell cycle regulation, and immune response (PubMed:22689415, PubMed:30497519, PubMed:31874856, PubMed:35238669). Plays a role in the inhibition of type I interferon signaling by mediating the 'Lys-33' to 'Lys-48' ubiquitination transition of TBK1 leading to its degradation (PubMed:27692986). Cleaves the ubiquitin chain from the histone demethylase LSD1/KDM1A and prevents it from degradation by the 26S proteasome, thus maintaining LSD1 protein level in cells (PubMed:30497519). Plays a role in the DNA damage response by regulating the deacetylase activity of HDAC1 (PubMed:31874856). Mechanistically, removes the 'Lys-63'-linked ubiquitin chain promoting the deacetylase activity of HDAC1 in response to DNA damage (PubMed:31874856). Also acts as a specific deubiquitinase of histone deacetylase 3/HDAC3 and cleaves its 'Lys-63'-linked ubiquitin chains to lower its histone deacetylase activity (PubMed:32404892). Regulates MYC levels and cell proliferation via antagonizing ubiquitin E3 ligase FBXW7 thereby preventing MYC 'Lys-48'-linked ubiquitination and degradation (PubMed:34102342). Participates in antiviral response by removing both 'Lys-48'-linked and 'Lys-63'-linked polyubiquitination of Zika virus envelope protein E (PubMed:34696459). Constitutively associated with IL-33R/IL1RL1, deconjugates its 'Lys-27'-linked polyubiquitination resulting in its autophagic degradation (PubMed:35238669).</text>
</comment>
<comment type="catalytic activity">
    <reaction evidence="4 8 11">
        <text>Thiol-dependent hydrolysis of ester, thioester, amide, peptide and isopeptide bonds formed by the C-terminal Gly of ubiquitin (a 76-residue protein attached to proteins as an intracellular targeting signal).</text>
        <dbReference type="EC" id="3.4.19.12"/>
    </reaction>
</comment>
<comment type="subunit">
    <text evidence="10">Interacts with isoform 1 of FBXW7; this interaction prevents FBXW7-mediated degradation of MYC.</text>
</comment>
<comment type="interaction">
    <interactant intactId="EBI-2512509">
        <id>Q8NB14</id>
    </interactant>
    <interactant intactId="EBI-399080">
        <id>Q92993</id>
        <label>KAT5</label>
    </interactant>
    <organismsDiffer>false</organismsDiffer>
    <experiments>3</experiments>
</comment>
<comment type="interaction">
    <interactant intactId="EBI-2512509">
        <id>Q8NB14</id>
    </interactant>
    <interactant intactId="EBI-11742507">
        <id>Q8TAP4-4</id>
        <label>LMO3</label>
    </interactant>
    <organismsDiffer>false</organismsDiffer>
    <experiments>3</experiments>
</comment>
<comment type="interaction">
    <interactant intactId="EBI-2512509">
        <id>Q8NB14</id>
    </interactant>
    <interactant intactId="EBI-1383528">
        <id>P17252</id>
        <label>PRKCA</label>
    </interactant>
    <organismsDiffer>false</organismsDiffer>
    <experiments>3</experiments>
</comment>
<comment type="interaction">
    <interactant intactId="EBI-2512509">
        <id>Q8NB14</id>
    </interactant>
    <interactant intactId="EBI-9090795">
        <id>Q15047-2</id>
        <label>SETDB1</label>
    </interactant>
    <organismsDiffer>false</organismsDiffer>
    <experiments>3</experiments>
</comment>
<comment type="interaction">
    <interactant intactId="EBI-2512509">
        <id>Q8NB14</id>
    </interactant>
    <interactant intactId="EBI-359832">
        <id>P61981</id>
        <label>YWHAG</label>
    </interactant>
    <organismsDiffer>false</organismsDiffer>
    <experiments>3</experiments>
</comment>
<comment type="subcellular location">
    <subcellularLocation>
        <location evidence="6 11">Cytoplasm</location>
    </subcellularLocation>
    <subcellularLocation>
        <location evidence="8">Nucleus</location>
    </subcellularLocation>
    <text evidence="8">In response to DNA damage, recruited to DNA damage sites in the nucleus.</text>
</comment>
<comment type="alternative products">
    <event type="alternative splicing"/>
    <isoform>
        <id>Q8NB14-1</id>
        <name>1</name>
        <sequence type="displayed"/>
    </isoform>
    <isoform>
        <id>Q8NB14-2</id>
        <name>2</name>
        <sequence type="described" ref="VSP_054486"/>
    </isoform>
</comment>
<comment type="tissue specificity">
    <text evidence="3 4">Highly expressed in skeletal muscle. Expressed in adrenal gland.</text>
</comment>
<comment type="similarity">
    <text evidence="14">Belongs to the peptidase C19 family.</text>
</comment>
<comment type="sequence caution" evidence="14">
    <conflict type="erroneous initiation">
        <sequence resource="EMBL-CDS" id="AAK26248"/>
    </conflict>
</comment>
<comment type="sequence caution" evidence="14">
    <conflict type="erroneous initiation">
        <sequence resource="EMBL-CDS" id="BAB71627"/>
    </conflict>
</comment>
<comment type="sequence caution" evidence="14">
    <conflict type="miscellaneous discrepancy">
        <sequence resource="EMBL-CDS" id="BAC03730"/>
    </conflict>
    <text>The absence of the residues from Tyr-840 to Ser-871 is not the result of an alternative splicing.</text>
</comment>
<protein>
    <recommendedName>
        <fullName>Ubiquitin carboxyl-terminal hydrolase 38</fullName>
        <ecNumber evidence="8 11">3.4.19.12</ecNumber>
    </recommendedName>
    <alternativeName>
        <fullName>Deubiquitinating enzyme 38</fullName>
    </alternativeName>
    <alternativeName>
        <fullName>HP43.8KD</fullName>
    </alternativeName>
    <alternativeName>
        <fullName>Ubiquitin thioesterase 38</fullName>
    </alternativeName>
    <alternativeName>
        <fullName>Ubiquitin-specific-processing protease 38</fullName>
    </alternativeName>
</protein>
<dbReference type="EC" id="3.4.19.12" evidence="8 11"/>
<dbReference type="EMBL" id="AK057992">
    <property type="protein sequence ID" value="BAB71627.1"/>
    <property type="status" value="ALT_INIT"/>
    <property type="molecule type" value="mRNA"/>
</dbReference>
<dbReference type="EMBL" id="AK091712">
    <property type="protein sequence ID" value="BAC03730.1"/>
    <property type="status" value="ALT_SEQ"/>
    <property type="molecule type" value="mRNA"/>
</dbReference>
<dbReference type="EMBL" id="AK126943">
    <property type="protein sequence ID" value="BAG54405.1"/>
    <property type="molecule type" value="mRNA"/>
</dbReference>
<dbReference type="EMBL" id="AL833976">
    <property type="protein sequence ID" value="CAD38820.1"/>
    <property type="molecule type" value="mRNA"/>
</dbReference>
<dbReference type="EMBL" id="AC099549">
    <property type="status" value="NOT_ANNOTATED_CDS"/>
    <property type="molecule type" value="Genomic_DNA"/>
</dbReference>
<dbReference type="EMBL" id="AC116175">
    <property type="status" value="NOT_ANNOTATED_CDS"/>
    <property type="molecule type" value="Genomic_DNA"/>
</dbReference>
<dbReference type="EMBL" id="CH471056">
    <property type="protein sequence ID" value="EAX05075.1"/>
    <property type="molecule type" value="Genomic_DNA"/>
</dbReference>
<dbReference type="EMBL" id="CH471056">
    <property type="protein sequence ID" value="EAX05076.1"/>
    <property type="molecule type" value="Genomic_DNA"/>
</dbReference>
<dbReference type="EMBL" id="BC039115">
    <property type="protein sequence ID" value="AAH39115.1"/>
    <property type="molecule type" value="mRNA"/>
</dbReference>
<dbReference type="EMBL" id="BC068975">
    <property type="protein sequence ID" value="AAH68975.1"/>
    <property type="molecule type" value="mRNA"/>
</dbReference>
<dbReference type="EMBL" id="AB067478">
    <property type="protein sequence ID" value="BAB67784.1"/>
    <property type="molecule type" value="mRNA"/>
</dbReference>
<dbReference type="EMBL" id="AF211481">
    <property type="protein sequence ID" value="AAK26248.1"/>
    <property type="status" value="ALT_INIT"/>
    <property type="molecule type" value="mRNA"/>
</dbReference>
<dbReference type="CCDS" id="CCDS3758.1">
    <molecule id="Q8NB14-1"/>
</dbReference>
<dbReference type="CCDS" id="CCDS77964.1">
    <molecule id="Q8NB14-2"/>
</dbReference>
<dbReference type="RefSeq" id="NP_001277254.1">
    <molecule id="Q8NB14-2"/>
    <property type="nucleotide sequence ID" value="NM_001290325.1"/>
</dbReference>
<dbReference type="RefSeq" id="NP_001277255.1">
    <property type="nucleotide sequence ID" value="NM_001290326.1"/>
</dbReference>
<dbReference type="RefSeq" id="NP_115946.2">
    <molecule id="Q8NB14-1"/>
    <property type="nucleotide sequence ID" value="NM_032557.6"/>
</dbReference>
<dbReference type="PDB" id="4RXX">
    <property type="method" value="X-ray"/>
    <property type="resolution" value="2.06 A"/>
    <property type="chains" value="A=1-424"/>
</dbReference>
<dbReference type="PDBsum" id="4RXX"/>
<dbReference type="SMR" id="Q8NB14"/>
<dbReference type="BioGRID" id="124165">
    <property type="interactions" value="35"/>
</dbReference>
<dbReference type="FunCoup" id="Q8NB14">
    <property type="interactions" value="3713"/>
</dbReference>
<dbReference type="IntAct" id="Q8NB14">
    <property type="interactions" value="16"/>
</dbReference>
<dbReference type="MINT" id="Q8NB14"/>
<dbReference type="STRING" id="9606.ENSP00000303434"/>
<dbReference type="MEROPS" id="C19.056"/>
<dbReference type="GlyGen" id="Q8NB14">
    <property type="glycosylation" value="2 sites, 1 O-linked glycan (1 site)"/>
</dbReference>
<dbReference type="iPTMnet" id="Q8NB14"/>
<dbReference type="PhosphoSitePlus" id="Q8NB14"/>
<dbReference type="BioMuta" id="USP38"/>
<dbReference type="jPOST" id="Q8NB14"/>
<dbReference type="MassIVE" id="Q8NB14"/>
<dbReference type="PaxDb" id="9606-ENSP00000303434"/>
<dbReference type="PeptideAtlas" id="Q8NB14"/>
<dbReference type="ProteomicsDB" id="61916"/>
<dbReference type="ProteomicsDB" id="72715">
    <molecule id="Q8NB14-1"/>
</dbReference>
<dbReference type="Pumba" id="Q8NB14"/>
<dbReference type="Antibodypedia" id="27336">
    <property type="antibodies" value="137 antibodies from 26 providers"/>
</dbReference>
<dbReference type="DNASU" id="84640"/>
<dbReference type="Ensembl" id="ENST00000307017.9">
    <molecule id="Q8NB14-1"/>
    <property type="protein sequence ID" value="ENSP00000303434.4"/>
    <property type="gene ID" value="ENSG00000170185.12"/>
</dbReference>
<dbReference type="Ensembl" id="ENST00000510377.5">
    <molecule id="Q8NB14-2"/>
    <property type="protein sequence ID" value="ENSP00000427647.1"/>
    <property type="gene ID" value="ENSG00000170185.12"/>
</dbReference>
<dbReference type="GeneID" id="84640"/>
<dbReference type="KEGG" id="hsa:84640"/>
<dbReference type="MANE-Select" id="ENST00000307017.9">
    <property type="protein sequence ID" value="ENSP00000303434.4"/>
    <property type="RefSeq nucleotide sequence ID" value="NM_032557.6"/>
    <property type="RefSeq protein sequence ID" value="NP_115946.2"/>
</dbReference>
<dbReference type="UCSC" id="uc003ija.5">
    <molecule id="Q8NB14-1"/>
    <property type="organism name" value="human"/>
</dbReference>
<dbReference type="AGR" id="HGNC:20067"/>
<dbReference type="CTD" id="84640"/>
<dbReference type="DisGeNET" id="84640"/>
<dbReference type="GeneCards" id="USP38"/>
<dbReference type="HGNC" id="HGNC:20067">
    <property type="gene designation" value="USP38"/>
</dbReference>
<dbReference type="HPA" id="ENSG00000170185">
    <property type="expression patterns" value="Tissue enhanced (skeletal)"/>
</dbReference>
<dbReference type="MIM" id="618322">
    <property type="type" value="gene"/>
</dbReference>
<dbReference type="neXtProt" id="NX_Q8NB14"/>
<dbReference type="OpenTargets" id="ENSG00000170185"/>
<dbReference type="PharmGKB" id="PA134880611"/>
<dbReference type="VEuPathDB" id="HostDB:ENSG00000170185"/>
<dbReference type="eggNOG" id="KOG1864">
    <property type="taxonomic scope" value="Eukaryota"/>
</dbReference>
<dbReference type="GeneTree" id="ENSGT00940000158403"/>
<dbReference type="HOGENOM" id="CLU_010910_0_0_1"/>
<dbReference type="InParanoid" id="Q8NB14"/>
<dbReference type="OMA" id="AFVCDSV"/>
<dbReference type="OrthoDB" id="2420415at2759"/>
<dbReference type="PAN-GO" id="Q8NB14">
    <property type="GO annotations" value="5 GO annotations based on evolutionary models"/>
</dbReference>
<dbReference type="PhylomeDB" id="Q8NB14"/>
<dbReference type="TreeFam" id="TF324529"/>
<dbReference type="PathwayCommons" id="Q8NB14"/>
<dbReference type="SignaLink" id="Q8NB14"/>
<dbReference type="BioGRID-ORCS" id="84640">
    <property type="hits" value="18 hits in 1164 CRISPR screens"/>
</dbReference>
<dbReference type="ChiTaRS" id="USP38">
    <property type="organism name" value="human"/>
</dbReference>
<dbReference type="EvolutionaryTrace" id="Q8NB14"/>
<dbReference type="GenomeRNAi" id="84640"/>
<dbReference type="Pharos" id="Q8NB14">
    <property type="development level" value="Tbio"/>
</dbReference>
<dbReference type="PRO" id="PR:Q8NB14"/>
<dbReference type="Proteomes" id="UP000005640">
    <property type="component" value="Chromosome 4"/>
</dbReference>
<dbReference type="RNAct" id="Q8NB14">
    <property type="molecule type" value="protein"/>
</dbReference>
<dbReference type="Bgee" id="ENSG00000170185">
    <property type="expression patterns" value="Expressed in vastus lateralis and 192 other cell types or tissues"/>
</dbReference>
<dbReference type="ExpressionAtlas" id="Q8NB14">
    <property type="expression patterns" value="baseline and differential"/>
</dbReference>
<dbReference type="GO" id="GO:0005737">
    <property type="term" value="C:cytoplasm"/>
    <property type="evidence" value="ECO:0000314"/>
    <property type="project" value="UniProt"/>
</dbReference>
<dbReference type="GO" id="GO:0005829">
    <property type="term" value="C:cytosol"/>
    <property type="evidence" value="ECO:0000318"/>
    <property type="project" value="GO_Central"/>
</dbReference>
<dbReference type="GO" id="GO:0005634">
    <property type="term" value="C:nucleus"/>
    <property type="evidence" value="ECO:0000318"/>
    <property type="project" value="GO_Central"/>
</dbReference>
<dbReference type="GO" id="GO:0004843">
    <property type="term" value="F:cysteine-type deubiquitinase activity"/>
    <property type="evidence" value="ECO:0000314"/>
    <property type="project" value="FlyBase"/>
</dbReference>
<dbReference type="GO" id="GO:0045824">
    <property type="term" value="P:negative regulation of innate immune response"/>
    <property type="evidence" value="ECO:0000314"/>
    <property type="project" value="UniProt"/>
</dbReference>
<dbReference type="GO" id="GO:0032435">
    <property type="term" value="P:negative regulation of proteasomal ubiquitin-dependent protein catabolic process"/>
    <property type="evidence" value="ECO:0000314"/>
    <property type="project" value="UniProt"/>
</dbReference>
<dbReference type="GO" id="GO:1990168">
    <property type="term" value="P:protein K33-linked deubiquitination"/>
    <property type="evidence" value="ECO:0000314"/>
    <property type="project" value="UniProt"/>
</dbReference>
<dbReference type="GO" id="GO:0031647">
    <property type="term" value="P:regulation of protein stability"/>
    <property type="evidence" value="ECO:0000318"/>
    <property type="project" value="GO_Central"/>
</dbReference>
<dbReference type="GO" id="GO:0006511">
    <property type="term" value="P:ubiquitin-dependent protein catabolic process"/>
    <property type="evidence" value="ECO:0007669"/>
    <property type="project" value="InterPro"/>
</dbReference>
<dbReference type="CDD" id="cd02664">
    <property type="entry name" value="Peptidase_C19H"/>
    <property type="match status" value="1"/>
</dbReference>
<dbReference type="Gene3D" id="3.90.70.10">
    <property type="entry name" value="Cysteine proteinases"/>
    <property type="match status" value="1"/>
</dbReference>
<dbReference type="InterPro" id="IPR038765">
    <property type="entry name" value="Papain-like_cys_pep_sf"/>
</dbReference>
<dbReference type="InterPro" id="IPR050164">
    <property type="entry name" value="Peptidase_C19"/>
</dbReference>
<dbReference type="InterPro" id="IPR001394">
    <property type="entry name" value="Peptidase_C19_UCH"/>
</dbReference>
<dbReference type="InterPro" id="IPR033840">
    <property type="entry name" value="USP38"/>
</dbReference>
<dbReference type="InterPro" id="IPR049407">
    <property type="entry name" value="Usp38-like_N"/>
</dbReference>
<dbReference type="InterPro" id="IPR018200">
    <property type="entry name" value="USP_CS"/>
</dbReference>
<dbReference type="InterPro" id="IPR028889">
    <property type="entry name" value="USP_dom"/>
</dbReference>
<dbReference type="PANTHER" id="PTHR24006">
    <property type="entry name" value="UBIQUITIN CARBOXYL-TERMINAL HYDROLASE"/>
    <property type="match status" value="1"/>
</dbReference>
<dbReference type="PANTHER" id="PTHR24006:SF710">
    <property type="entry name" value="UBIQUITIN CARBOXYL-TERMINAL HYDROLASE 38"/>
    <property type="match status" value="1"/>
</dbReference>
<dbReference type="Pfam" id="PF00443">
    <property type="entry name" value="UCH"/>
    <property type="match status" value="1"/>
</dbReference>
<dbReference type="Pfam" id="PF21246">
    <property type="entry name" value="Usp38-like_N"/>
    <property type="match status" value="1"/>
</dbReference>
<dbReference type="SUPFAM" id="SSF54001">
    <property type="entry name" value="Cysteine proteinases"/>
    <property type="match status" value="1"/>
</dbReference>
<dbReference type="PROSITE" id="PS00972">
    <property type="entry name" value="USP_1"/>
    <property type="match status" value="1"/>
</dbReference>
<dbReference type="PROSITE" id="PS00973">
    <property type="entry name" value="USP_2"/>
    <property type="match status" value="1"/>
</dbReference>
<dbReference type="PROSITE" id="PS50235">
    <property type="entry name" value="USP_3"/>
    <property type="match status" value="1"/>
</dbReference>
<gene>
    <name type="primary">USP38</name>
    <name type="synonym">KIAA1891</name>
</gene>
<accession>Q8NB14</accession>
<accession>B3KX93</accession>
<accession>Q3ZCV1</accession>
<accession>Q8NDF5</accession>
<accession>Q96DK6</accession>
<accession>Q96PZ6</accession>
<accession>Q9BY55</accession>
<organism>
    <name type="scientific">Homo sapiens</name>
    <name type="common">Human</name>
    <dbReference type="NCBI Taxonomy" id="9606"/>
    <lineage>
        <taxon>Eukaryota</taxon>
        <taxon>Metazoa</taxon>
        <taxon>Chordata</taxon>
        <taxon>Craniata</taxon>
        <taxon>Vertebrata</taxon>
        <taxon>Euteleostomi</taxon>
        <taxon>Mammalia</taxon>
        <taxon>Eutheria</taxon>
        <taxon>Euarchontoglires</taxon>
        <taxon>Primates</taxon>
        <taxon>Haplorrhini</taxon>
        <taxon>Catarrhini</taxon>
        <taxon>Hominidae</taxon>
        <taxon>Homo</taxon>
    </lineage>
</organism>
<reference key="1">
    <citation type="journal article" date="2004" name="Nat. Genet.">
        <title>Complete sequencing and characterization of 21,243 full-length human cDNAs.</title>
        <authorList>
            <person name="Ota T."/>
            <person name="Suzuki Y."/>
            <person name="Nishikawa T."/>
            <person name="Otsuki T."/>
            <person name="Sugiyama T."/>
            <person name="Irie R."/>
            <person name="Wakamatsu A."/>
            <person name="Hayashi K."/>
            <person name="Sato H."/>
            <person name="Nagai K."/>
            <person name="Kimura K."/>
            <person name="Makita H."/>
            <person name="Sekine M."/>
            <person name="Obayashi M."/>
            <person name="Nishi T."/>
            <person name="Shibahara T."/>
            <person name="Tanaka T."/>
            <person name="Ishii S."/>
            <person name="Yamamoto J."/>
            <person name="Saito K."/>
            <person name="Kawai Y."/>
            <person name="Isono Y."/>
            <person name="Nakamura Y."/>
            <person name="Nagahari K."/>
            <person name="Murakami K."/>
            <person name="Yasuda T."/>
            <person name="Iwayanagi T."/>
            <person name="Wagatsuma M."/>
            <person name="Shiratori A."/>
            <person name="Sudo H."/>
            <person name="Hosoiri T."/>
            <person name="Kaku Y."/>
            <person name="Kodaira H."/>
            <person name="Kondo H."/>
            <person name="Sugawara M."/>
            <person name="Takahashi M."/>
            <person name="Kanda K."/>
            <person name="Yokoi T."/>
            <person name="Furuya T."/>
            <person name="Kikkawa E."/>
            <person name="Omura Y."/>
            <person name="Abe K."/>
            <person name="Kamihara K."/>
            <person name="Katsuta N."/>
            <person name="Sato K."/>
            <person name="Tanikawa M."/>
            <person name="Yamazaki M."/>
            <person name="Ninomiya K."/>
            <person name="Ishibashi T."/>
            <person name="Yamashita H."/>
            <person name="Murakawa K."/>
            <person name="Fujimori K."/>
            <person name="Tanai H."/>
            <person name="Kimata M."/>
            <person name="Watanabe M."/>
            <person name="Hiraoka S."/>
            <person name="Chiba Y."/>
            <person name="Ishida S."/>
            <person name="Ono Y."/>
            <person name="Takiguchi S."/>
            <person name="Watanabe S."/>
            <person name="Yosida M."/>
            <person name="Hotuta T."/>
            <person name="Kusano J."/>
            <person name="Kanehori K."/>
            <person name="Takahashi-Fujii A."/>
            <person name="Hara H."/>
            <person name="Tanase T.-O."/>
            <person name="Nomura Y."/>
            <person name="Togiya S."/>
            <person name="Komai F."/>
            <person name="Hara R."/>
            <person name="Takeuchi K."/>
            <person name="Arita M."/>
            <person name="Imose N."/>
            <person name="Musashino K."/>
            <person name="Yuuki H."/>
            <person name="Oshima A."/>
            <person name="Sasaki N."/>
            <person name="Aotsuka S."/>
            <person name="Yoshikawa Y."/>
            <person name="Matsunawa H."/>
            <person name="Ichihara T."/>
            <person name="Shiohata N."/>
            <person name="Sano S."/>
            <person name="Moriya S."/>
            <person name="Momiyama H."/>
            <person name="Satoh N."/>
            <person name="Takami S."/>
            <person name="Terashima Y."/>
            <person name="Suzuki O."/>
            <person name="Nakagawa S."/>
            <person name="Senoh A."/>
            <person name="Mizoguchi H."/>
            <person name="Goto Y."/>
            <person name="Shimizu F."/>
            <person name="Wakebe H."/>
            <person name="Hishigaki H."/>
            <person name="Watanabe T."/>
            <person name="Sugiyama A."/>
            <person name="Takemoto M."/>
            <person name="Kawakami B."/>
            <person name="Yamazaki M."/>
            <person name="Watanabe K."/>
            <person name="Kumagai A."/>
            <person name="Itakura S."/>
            <person name="Fukuzumi Y."/>
            <person name="Fujimori Y."/>
            <person name="Komiyama M."/>
            <person name="Tashiro H."/>
            <person name="Tanigami A."/>
            <person name="Fujiwara T."/>
            <person name="Ono T."/>
            <person name="Yamada K."/>
            <person name="Fujii Y."/>
            <person name="Ozaki K."/>
            <person name="Hirao M."/>
            <person name="Ohmori Y."/>
            <person name="Kawabata A."/>
            <person name="Hikiji T."/>
            <person name="Kobatake N."/>
            <person name="Inagaki H."/>
            <person name="Ikema Y."/>
            <person name="Okamoto S."/>
            <person name="Okitani R."/>
            <person name="Kawakami T."/>
            <person name="Noguchi S."/>
            <person name="Itoh T."/>
            <person name="Shigeta K."/>
            <person name="Senba T."/>
            <person name="Matsumura K."/>
            <person name="Nakajima Y."/>
            <person name="Mizuno T."/>
            <person name="Morinaga M."/>
            <person name="Sasaki M."/>
            <person name="Togashi T."/>
            <person name="Oyama M."/>
            <person name="Hata H."/>
            <person name="Watanabe M."/>
            <person name="Komatsu T."/>
            <person name="Mizushima-Sugano J."/>
            <person name="Satoh T."/>
            <person name="Shirai Y."/>
            <person name="Takahashi Y."/>
            <person name="Nakagawa K."/>
            <person name="Okumura K."/>
            <person name="Nagase T."/>
            <person name="Nomura N."/>
            <person name="Kikuchi H."/>
            <person name="Masuho Y."/>
            <person name="Yamashita R."/>
            <person name="Nakai K."/>
            <person name="Yada T."/>
            <person name="Nakamura Y."/>
            <person name="Ohara O."/>
            <person name="Isogai T."/>
            <person name="Sugano S."/>
        </authorList>
    </citation>
    <scope>NUCLEOTIDE SEQUENCE [LARGE SCALE MRNA] (ISOFORM 1)</scope>
    <source>
        <tissue>Brain</tissue>
        <tissue>Chondrocyte</tissue>
        <tissue>Gastric mucosa</tissue>
    </source>
</reference>
<reference key="2">
    <citation type="journal article" date="2007" name="BMC Genomics">
        <title>The full-ORF clone resource of the German cDNA consortium.</title>
        <authorList>
            <person name="Bechtel S."/>
            <person name="Rosenfelder H."/>
            <person name="Duda A."/>
            <person name="Schmidt C.P."/>
            <person name="Ernst U."/>
            <person name="Wellenreuther R."/>
            <person name="Mehrle A."/>
            <person name="Schuster C."/>
            <person name="Bahr A."/>
            <person name="Bloecker H."/>
            <person name="Heubner D."/>
            <person name="Hoerlein A."/>
            <person name="Michel G."/>
            <person name="Wedler H."/>
            <person name="Koehrer K."/>
            <person name="Ottenwaelder B."/>
            <person name="Poustka A."/>
            <person name="Wiemann S."/>
            <person name="Schupp I."/>
        </authorList>
    </citation>
    <scope>NUCLEOTIDE SEQUENCE [LARGE SCALE MRNA] (ISOFORM 1)</scope>
    <source>
        <tissue>Testis</tissue>
    </source>
</reference>
<reference key="3">
    <citation type="journal article" date="2005" name="Nature">
        <title>Generation and annotation of the DNA sequences of human chromosomes 2 and 4.</title>
        <authorList>
            <person name="Hillier L.W."/>
            <person name="Graves T.A."/>
            <person name="Fulton R.S."/>
            <person name="Fulton L.A."/>
            <person name="Pepin K.H."/>
            <person name="Minx P."/>
            <person name="Wagner-McPherson C."/>
            <person name="Layman D."/>
            <person name="Wylie K."/>
            <person name="Sekhon M."/>
            <person name="Becker M.C."/>
            <person name="Fewell G.A."/>
            <person name="Delehaunty K.D."/>
            <person name="Miner T.L."/>
            <person name="Nash W.E."/>
            <person name="Kremitzki C."/>
            <person name="Oddy L."/>
            <person name="Du H."/>
            <person name="Sun H."/>
            <person name="Bradshaw-Cordum H."/>
            <person name="Ali J."/>
            <person name="Carter J."/>
            <person name="Cordes M."/>
            <person name="Harris A."/>
            <person name="Isak A."/>
            <person name="van Brunt A."/>
            <person name="Nguyen C."/>
            <person name="Du F."/>
            <person name="Courtney L."/>
            <person name="Kalicki J."/>
            <person name="Ozersky P."/>
            <person name="Abbott S."/>
            <person name="Armstrong J."/>
            <person name="Belter E.A."/>
            <person name="Caruso L."/>
            <person name="Cedroni M."/>
            <person name="Cotton M."/>
            <person name="Davidson T."/>
            <person name="Desai A."/>
            <person name="Elliott G."/>
            <person name="Erb T."/>
            <person name="Fronick C."/>
            <person name="Gaige T."/>
            <person name="Haakenson W."/>
            <person name="Haglund K."/>
            <person name="Holmes A."/>
            <person name="Harkins R."/>
            <person name="Kim K."/>
            <person name="Kruchowski S.S."/>
            <person name="Strong C.M."/>
            <person name="Grewal N."/>
            <person name="Goyea E."/>
            <person name="Hou S."/>
            <person name="Levy A."/>
            <person name="Martinka S."/>
            <person name="Mead K."/>
            <person name="McLellan M.D."/>
            <person name="Meyer R."/>
            <person name="Randall-Maher J."/>
            <person name="Tomlinson C."/>
            <person name="Dauphin-Kohlberg S."/>
            <person name="Kozlowicz-Reilly A."/>
            <person name="Shah N."/>
            <person name="Swearengen-Shahid S."/>
            <person name="Snider J."/>
            <person name="Strong J.T."/>
            <person name="Thompson J."/>
            <person name="Yoakum M."/>
            <person name="Leonard S."/>
            <person name="Pearman C."/>
            <person name="Trani L."/>
            <person name="Radionenko M."/>
            <person name="Waligorski J.E."/>
            <person name="Wang C."/>
            <person name="Rock S.M."/>
            <person name="Tin-Wollam A.-M."/>
            <person name="Maupin R."/>
            <person name="Latreille P."/>
            <person name="Wendl M.C."/>
            <person name="Yang S.-P."/>
            <person name="Pohl C."/>
            <person name="Wallis J.W."/>
            <person name="Spieth J."/>
            <person name="Bieri T.A."/>
            <person name="Berkowicz N."/>
            <person name="Nelson J.O."/>
            <person name="Osborne J."/>
            <person name="Ding L."/>
            <person name="Meyer R."/>
            <person name="Sabo A."/>
            <person name="Shotland Y."/>
            <person name="Sinha P."/>
            <person name="Wohldmann P.E."/>
            <person name="Cook L.L."/>
            <person name="Hickenbotham M.T."/>
            <person name="Eldred J."/>
            <person name="Williams D."/>
            <person name="Jones T.A."/>
            <person name="She X."/>
            <person name="Ciccarelli F.D."/>
            <person name="Izaurralde E."/>
            <person name="Taylor J."/>
            <person name="Schmutz J."/>
            <person name="Myers R.M."/>
            <person name="Cox D.R."/>
            <person name="Huang X."/>
            <person name="McPherson J.D."/>
            <person name="Mardis E.R."/>
            <person name="Clifton S.W."/>
            <person name="Warren W.C."/>
            <person name="Chinwalla A.T."/>
            <person name="Eddy S.R."/>
            <person name="Marra M.A."/>
            <person name="Ovcharenko I."/>
            <person name="Furey T.S."/>
            <person name="Miller W."/>
            <person name="Eichler E.E."/>
            <person name="Bork P."/>
            <person name="Suyama M."/>
            <person name="Torrents D."/>
            <person name="Waterston R.H."/>
            <person name="Wilson R.K."/>
        </authorList>
    </citation>
    <scope>NUCLEOTIDE SEQUENCE [LARGE SCALE GENOMIC DNA]</scope>
</reference>
<reference key="4">
    <citation type="submission" date="2005-09" db="EMBL/GenBank/DDBJ databases">
        <authorList>
            <person name="Mural R.J."/>
            <person name="Istrail S."/>
            <person name="Sutton G.G."/>
            <person name="Florea L."/>
            <person name="Halpern A.L."/>
            <person name="Mobarry C.M."/>
            <person name="Lippert R."/>
            <person name="Walenz B."/>
            <person name="Shatkay H."/>
            <person name="Dew I."/>
            <person name="Miller J.R."/>
            <person name="Flanigan M.J."/>
            <person name="Edwards N.J."/>
            <person name="Bolanos R."/>
            <person name="Fasulo D."/>
            <person name="Halldorsson B.V."/>
            <person name="Hannenhalli S."/>
            <person name="Turner R."/>
            <person name="Yooseph S."/>
            <person name="Lu F."/>
            <person name="Nusskern D.R."/>
            <person name="Shue B.C."/>
            <person name="Zheng X.H."/>
            <person name="Zhong F."/>
            <person name="Delcher A.L."/>
            <person name="Huson D.H."/>
            <person name="Kravitz S.A."/>
            <person name="Mouchard L."/>
            <person name="Reinert K."/>
            <person name="Remington K.A."/>
            <person name="Clark A.G."/>
            <person name="Waterman M.S."/>
            <person name="Eichler E.E."/>
            <person name="Adams M.D."/>
            <person name="Hunkapiller M.W."/>
            <person name="Myers E.W."/>
            <person name="Venter J.C."/>
        </authorList>
    </citation>
    <scope>NUCLEOTIDE SEQUENCE [LARGE SCALE GENOMIC DNA]</scope>
</reference>
<reference key="5">
    <citation type="journal article" date="2004" name="Genome Res.">
        <title>The status, quality, and expansion of the NIH full-length cDNA project: the Mammalian Gene Collection (MGC).</title>
        <authorList>
            <consortium name="The MGC Project Team"/>
        </authorList>
    </citation>
    <scope>NUCLEOTIDE SEQUENCE [LARGE SCALE MRNA] (ISOFORMS 1 AND 2)</scope>
    <source>
        <tissue>Brain</tissue>
        <tissue>Testis</tissue>
    </source>
</reference>
<reference key="6">
    <citation type="journal article" date="2001" name="DNA Res.">
        <title>Prediction of the coding sequences of unidentified human genes. XXI. The complete sequences of 60 new cDNA clones from brain which code for large proteins.</title>
        <authorList>
            <person name="Nagase T."/>
            <person name="Kikuno R."/>
            <person name="Ohara O."/>
        </authorList>
    </citation>
    <scope>NUCLEOTIDE SEQUENCE [LARGE SCALE MRNA] OF 263-1042 (ISOFORM 1)</scope>
    <scope>TISSUE SPECIFICITY</scope>
    <source>
        <tissue>Brain</tissue>
    </source>
</reference>
<reference key="7">
    <citation type="journal article" date="2000" name="Proc. Natl. Acad. Sci. U.S.A.">
        <title>Gene expression profiling in the human hypothalamus-pituitary-adrenal axis and full-length cDNA cloning.</title>
        <authorList>
            <person name="Hu R.-M."/>
            <person name="Han Z.-G."/>
            <person name="Song H.-D."/>
            <person name="Peng Y.-D."/>
            <person name="Huang Q.-H."/>
            <person name="Ren S.-X."/>
            <person name="Gu Y.-J."/>
            <person name="Huang C.-H."/>
            <person name="Li Y.-B."/>
            <person name="Jiang C.-L."/>
            <person name="Fu G."/>
            <person name="Zhang Q.-H."/>
            <person name="Gu B.-W."/>
            <person name="Dai M."/>
            <person name="Mao Y.-F."/>
            <person name="Gao G.-F."/>
            <person name="Rong R."/>
            <person name="Ye M."/>
            <person name="Zhou J."/>
            <person name="Xu S.-H."/>
            <person name="Gu J."/>
            <person name="Shi J.-X."/>
            <person name="Jin W.-R."/>
            <person name="Zhang C.-K."/>
            <person name="Wu T.-M."/>
            <person name="Huang G.-Y."/>
            <person name="Chen Z."/>
            <person name="Chen M.-D."/>
            <person name="Chen J.-L."/>
        </authorList>
    </citation>
    <scope>NUCLEOTIDE SEQUENCE [LARGE SCALE MRNA] OF 633-1042 (ISOFORM 1)</scope>
    <source>
        <tissue>Adrenal gland</tissue>
    </source>
</reference>
<reference key="8">
    <citation type="journal article" date="2004" name="Biochem. Biophys. Res. Commun.">
        <title>Cloning and enzymatic analysis of 22 novel human ubiquitin-specific proteases.</title>
        <authorList>
            <person name="Quesada V."/>
            <person name="Diaz-Perales A."/>
            <person name="Gutierrez-Fernandez A."/>
            <person name="Garabaya C."/>
            <person name="Cal S."/>
            <person name="Lopez-Otin C."/>
        </authorList>
    </citation>
    <scope>TISSUE SPECIFICITY</scope>
    <scope>ENZYME ACTIVITY</scope>
</reference>
<reference key="9">
    <citation type="journal article" date="2012" name="ChemBioChem">
        <title>Profiling ubiquitin linkage specificities of deubiquitinating enzymes with branched ubiquitin isopeptide probes.</title>
        <authorList>
            <person name="Iphofer A."/>
            <person name="Kummer A."/>
            <person name="Nimtz M."/>
            <person name="Ritter A."/>
            <person name="Arnold T."/>
            <person name="Frank R."/>
            <person name="van den Heuvel J."/>
            <person name="Kessler B.M."/>
            <person name="Jansch L."/>
            <person name="Franke R."/>
        </authorList>
    </citation>
    <scope>FUNCTION</scope>
    <scope>LINKAGE SPECIFICITY</scope>
</reference>
<reference key="10">
    <citation type="journal article" date="2016" name="Mol. Cell">
        <title>USP38 Inhibits Type I Interferon Signaling by Editing TBK1 Ubiquitination through NLRP4 Signalosome.</title>
        <authorList>
            <person name="Lin M."/>
            <person name="Zhao Z."/>
            <person name="Yang Z."/>
            <person name="Meng Q."/>
            <person name="Tan P."/>
            <person name="Xie W."/>
            <person name="Qin Y."/>
            <person name="Wang R.F."/>
            <person name="Cui J."/>
        </authorList>
    </citation>
    <scope>FUNCTION</scope>
    <scope>SUBCELLULAR LOCATION</scope>
    <scope>MUTAGENESIS OF CYS-545 AND HIS-857</scope>
</reference>
<reference key="11">
    <citation type="journal article" date="2018" name="Biol. Res.">
        <title>The deubiquitinase USP38 affects cellular functions through interacting with LSD1.</title>
        <authorList>
            <person name="Liu W."/>
            <person name="Zhang Q."/>
            <person name="Fang Y."/>
            <person name="Wang Y."/>
        </authorList>
    </citation>
    <scope>FUNCTION</scope>
    <scope>MUTAGENESIS OF CYS-454</scope>
</reference>
<reference key="12">
    <citation type="journal article" date="2020" name="Cancer Res.">
        <title>The Deubiquitinase USP38 Promotes NHEJ Repair through Regulation of HDAC1 Activity and Regulates Cancer Cell Response to Genotoxic Insults.</title>
        <authorList>
            <person name="Yang Y."/>
            <person name="Yang C."/>
            <person name="Li T."/>
            <person name="Yu S."/>
            <person name="Gan T."/>
            <person name="Hu J."/>
            <person name="Cui J."/>
            <person name="Zheng X."/>
        </authorList>
    </citation>
    <scope>FUNCTION</scope>
    <scope>SUBCELLULAR LOCATION</scope>
    <scope>MUTAGENESIS OF CYS-545 AND HIS-857</scope>
    <scope>CATALYTIC ACTIVITY</scope>
</reference>
<reference key="13">
    <citation type="journal article" date="2020" name="Oncogenesis">
        <title>USP38 regulates the stemness and chemoresistance of human colorectal cancer via regulation of HDAC3.</title>
        <authorList>
            <person name="Zhan W."/>
            <person name="Liao X."/>
            <person name="Liu J."/>
            <person name="Tian T."/>
            <person name="Yu L."/>
            <person name="Li R."/>
        </authorList>
    </citation>
    <scope>FUNCTION</scope>
</reference>
<reference key="14">
    <citation type="journal article" date="2021" name="Int. J. Biochem.">
        <title>The deubiquitinase USP38 promotes cell proliferation through stabilizing c-Myc.</title>
        <authorList>
            <person name="Xu Z."/>
            <person name="Hu H."/>
            <person name="Fang D."/>
            <person name="Wang J."/>
            <person name="Zhao K."/>
        </authorList>
    </citation>
    <scope>FUNCTION</scope>
    <scope>INTERACTION WITH FBXW7</scope>
</reference>
<reference key="15">
    <citation type="journal article" date="2021" name="Viruses">
        <title>USP38 Inhibits Zika Virus Infection by Removing Envelope Protein Ubiquitination.</title>
        <authorList>
            <person name="Wang Y."/>
            <person name="Li Q."/>
            <person name="Hu D."/>
            <person name="Gao D."/>
            <person name="Wang W."/>
            <person name="Wu K."/>
            <person name="Wu J."/>
        </authorList>
    </citation>
    <scope>FUNCTION</scope>
    <scope>SUBCELLULAR LOCATION</scope>
    <scope>CATALYTIC ACTIVITY</scope>
</reference>
<reference key="16">
    <citation type="journal article" date="2022" name="Proc. Natl. Acad. Sci. U.S.A.">
        <title>Reciprocal regulation of IL-33 receptor-mediated inflammatory response and pulmonary fibrosis by TRAF6 and USP38.</title>
        <authorList>
            <person name="Yi X.M."/>
            <person name="Li M."/>
            <person name="Chen Y.D."/>
            <person name="Shu H.B."/>
            <person name="Li S."/>
        </authorList>
    </citation>
    <scope>FUNCTION</scope>
</reference>
<evidence type="ECO:0000255" key="1">
    <source>
        <dbReference type="PROSITE-ProRule" id="PRU10092"/>
    </source>
</evidence>
<evidence type="ECO:0000255" key="2">
    <source>
        <dbReference type="PROSITE-ProRule" id="PRU10093"/>
    </source>
</evidence>
<evidence type="ECO:0000269" key="3">
    <source>
    </source>
</evidence>
<evidence type="ECO:0000269" key="4">
    <source>
    </source>
</evidence>
<evidence type="ECO:0000269" key="5">
    <source>
    </source>
</evidence>
<evidence type="ECO:0000269" key="6">
    <source>
    </source>
</evidence>
<evidence type="ECO:0000269" key="7">
    <source>
    </source>
</evidence>
<evidence type="ECO:0000269" key="8">
    <source>
    </source>
</evidence>
<evidence type="ECO:0000269" key="9">
    <source>
    </source>
</evidence>
<evidence type="ECO:0000269" key="10">
    <source>
    </source>
</evidence>
<evidence type="ECO:0000269" key="11">
    <source>
    </source>
</evidence>
<evidence type="ECO:0000269" key="12">
    <source>
    </source>
</evidence>
<evidence type="ECO:0000303" key="13">
    <source>
    </source>
</evidence>
<evidence type="ECO:0000305" key="14"/>
<evidence type="ECO:0007829" key="15">
    <source>
        <dbReference type="PDB" id="4RXX"/>
    </source>
</evidence>
<name>UBP38_HUMAN</name>
<feature type="chain" id="PRO_0000080668" description="Ubiquitin carboxyl-terminal hydrolase 38">
    <location>
        <begin position="1"/>
        <end position="1042"/>
    </location>
</feature>
<feature type="domain" description="USP">
    <location>
        <begin position="445"/>
        <end position="949"/>
    </location>
</feature>
<feature type="active site" description="Nucleophile" evidence="1 2">
    <location>
        <position position="454"/>
    </location>
</feature>
<feature type="active site" description="Proton acceptor" evidence="1 2">
    <location>
        <position position="857"/>
    </location>
</feature>
<feature type="splice variant" id="VSP_054486" description="In isoform 2." evidence="13">
    <original>EQELNARARALQAASASCSFRPNGFDDNDPPGSCGPTGGGGGGGFNTVGRLVF</original>
    <variation>VSWKYKLYLLKILNN</variation>
    <location>
        <begin position="990"/>
        <end position="1042"/>
    </location>
</feature>
<feature type="mutagenesis site" description="Loss of binding to LSD1/KDM1A." evidence="6">
    <original>C</original>
    <variation>A</variation>
    <location>
        <position position="454"/>
    </location>
</feature>
<feature type="mutagenesis site" description="Loss of deubiquitinating activity; when associated with A-857." evidence="6 8">
    <original>C</original>
    <variation>A</variation>
    <location>
        <position position="454"/>
    </location>
</feature>
<feature type="mutagenesis site" description="Loss of deubiquitinating activity; when associated with A-454." evidence="6 8">
    <original>H</original>
    <variation>A</variation>
    <location>
        <position position="857"/>
    </location>
</feature>
<feature type="sequence conflict" description="In Ref. 1; BAC03730." evidence="14" ref="1">
    <original>M</original>
    <variation>V</variation>
    <location>
        <position position="646"/>
    </location>
</feature>
<feature type="sequence conflict" description="In Ref. 1; BAB71627." evidence="14" ref="1">
    <original>S</original>
    <variation>G</variation>
    <location>
        <position position="919"/>
    </location>
</feature>
<feature type="helix" evidence="15">
    <location>
        <begin position="2"/>
        <end position="9"/>
    </location>
</feature>
<feature type="helix" evidence="15">
    <location>
        <begin position="15"/>
        <end position="28"/>
    </location>
</feature>
<feature type="helix" evidence="15">
    <location>
        <begin position="35"/>
        <end position="51"/>
    </location>
</feature>
<feature type="helix" evidence="15">
    <location>
        <begin position="55"/>
        <end position="71"/>
    </location>
</feature>
<feature type="helix" evidence="15">
    <location>
        <begin position="73"/>
        <end position="79"/>
    </location>
</feature>
<feature type="helix" evidence="15">
    <location>
        <begin position="82"/>
        <end position="91"/>
    </location>
</feature>
<feature type="helix" evidence="15">
    <location>
        <begin position="101"/>
        <end position="114"/>
    </location>
</feature>
<feature type="helix" evidence="15">
    <location>
        <begin position="120"/>
        <end position="136"/>
    </location>
</feature>
<feature type="helix" evidence="15">
    <location>
        <begin position="141"/>
        <end position="153"/>
    </location>
</feature>
<feature type="helix" evidence="15">
    <location>
        <begin position="155"/>
        <end position="157"/>
    </location>
</feature>
<feature type="helix" evidence="15">
    <location>
        <begin position="162"/>
        <end position="175"/>
    </location>
</feature>
<feature type="helix" evidence="15">
    <location>
        <begin position="185"/>
        <end position="208"/>
    </location>
</feature>
<feature type="helix" evidence="15">
    <location>
        <begin position="210"/>
        <end position="212"/>
    </location>
</feature>
<feature type="helix" evidence="15">
    <location>
        <begin position="213"/>
        <end position="224"/>
    </location>
</feature>
<feature type="helix" evidence="15">
    <location>
        <begin position="235"/>
        <end position="240"/>
    </location>
</feature>
<feature type="helix" evidence="15">
    <location>
        <begin position="246"/>
        <end position="258"/>
    </location>
</feature>
<feature type="helix" evidence="15">
    <location>
        <begin position="264"/>
        <end position="276"/>
    </location>
</feature>
<feature type="helix" evidence="15">
    <location>
        <begin position="277"/>
        <end position="279"/>
    </location>
</feature>
<feature type="helix" evidence="15">
    <location>
        <begin position="286"/>
        <end position="299"/>
    </location>
</feature>
<feature type="helix" evidence="15">
    <location>
        <begin position="303"/>
        <end position="319"/>
    </location>
</feature>
<feature type="helix" evidence="15">
    <location>
        <begin position="320"/>
        <end position="322"/>
    </location>
</feature>
<feature type="turn" evidence="15">
    <location>
        <begin position="324"/>
        <end position="326"/>
    </location>
</feature>
<feature type="helix" evidence="15">
    <location>
        <begin position="327"/>
        <end position="340"/>
    </location>
</feature>
<feature type="helix" evidence="15">
    <location>
        <begin position="346"/>
        <end position="351"/>
    </location>
</feature>
<feature type="helix" evidence="15">
    <location>
        <begin position="352"/>
        <end position="354"/>
    </location>
</feature>
<feature type="helix" evidence="15">
    <location>
        <begin position="355"/>
        <end position="362"/>
    </location>
</feature>
<feature type="helix" evidence="15">
    <location>
        <begin position="368"/>
        <end position="387"/>
    </location>
</feature>
<feature type="helix" evidence="15">
    <location>
        <begin position="392"/>
        <end position="402"/>
    </location>
</feature>
<feature type="helix" evidence="15">
    <location>
        <begin position="410"/>
        <end position="416"/>
    </location>
</feature>